<dbReference type="EC" id="1.14.99.60" evidence="1"/>
<dbReference type="EMBL" id="CP000926">
    <property type="protein sequence ID" value="ABY96368.1"/>
    <property type="molecule type" value="Genomic_DNA"/>
</dbReference>
<dbReference type="RefSeq" id="WP_012270220.1">
    <property type="nucleotide sequence ID" value="NC_010322.1"/>
</dbReference>
<dbReference type="SMR" id="B0KK40"/>
<dbReference type="KEGG" id="ppg:PputGB1_0457"/>
<dbReference type="eggNOG" id="COG2941">
    <property type="taxonomic scope" value="Bacteria"/>
</dbReference>
<dbReference type="HOGENOM" id="CLU_088601_0_0_6"/>
<dbReference type="UniPathway" id="UPA00232"/>
<dbReference type="Proteomes" id="UP000002157">
    <property type="component" value="Chromosome"/>
</dbReference>
<dbReference type="GO" id="GO:0005886">
    <property type="term" value="C:plasma membrane"/>
    <property type="evidence" value="ECO:0007669"/>
    <property type="project" value="UniProtKB-SubCell"/>
</dbReference>
<dbReference type="GO" id="GO:0008682">
    <property type="term" value="F:3-demethoxyubiquinol 3-hydroxylase activity"/>
    <property type="evidence" value="ECO:0007669"/>
    <property type="project" value="UniProtKB-EC"/>
</dbReference>
<dbReference type="GO" id="GO:0046872">
    <property type="term" value="F:metal ion binding"/>
    <property type="evidence" value="ECO:0007669"/>
    <property type="project" value="UniProtKB-KW"/>
</dbReference>
<dbReference type="GO" id="GO:0006744">
    <property type="term" value="P:ubiquinone biosynthetic process"/>
    <property type="evidence" value="ECO:0007669"/>
    <property type="project" value="UniProtKB-UniRule"/>
</dbReference>
<dbReference type="CDD" id="cd01042">
    <property type="entry name" value="DMQH"/>
    <property type="match status" value="1"/>
</dbReference>
<dbReference type="FunFam" id="1.20.1260.10:FF:000013">
    <property type="entry name" value="2-nonaprenyl-3-methyl-6-methoxy-1,4-benzoquinol hydroxylase"/>
    <property type="match status" value="1"/>
</dbReference>
<dbReference type="Gene3D" id="1.20.1260.10">
    <property type="match status" value="1"/>
</dbReference>
<dbReference type="HAMAP" id="MF_01658">
    <property type="entry name" value="COQ7"/>
    <property type="match status" value="1"/>
</dbReference>
<dbReference type="InterPro" id="IPR047809">
    <property type="entry name" value="COQ7_proteobact"/>
</dbReference>
<dbReference type="InterPro" id="IPR012347">
    <property type="entry name" value="Ferritin-like"/>
</dbReference>
<dbReference type="InterPro" id="IPR009078">
    <property type="entry name" value="Ferritin-like_SF"/>
</dbReference>
<dbReference type="InterPro" id="IPR011566">
    <property type="entry name" value="Ubq_synth_Coq7"/>
</dbReference>
<dbReference type="NCBIfam" id="NF033656">
    <property type="entry name" value="DMQ_monoox_COQ7"/>
    <property type="match status" value="1"/>
</dbReference>
<dbReference type="PANTHER" id="PTHR11237:SF4">
    <property type="entry name" value="5-DEMETHOXYUBIQUINONE HYDROXYLASE, MITOCHONDRIAL"/>
    <property type="match status" value="1"/>
</dbReference>
<dbReference type="PANTHER" id="PTHR11237">
    <property type="entry name" value="COENZYME Q10 BIOSYNTHESIS PROTEIN 7"/>
    <property type="match status" value="1"/>
</dbReference>
<dbReference type="Pfam" id="PF03232">
    <property type="entry name" value="COQ7"/>
    <property type="match status" value="1"/>
</dbReference>
<dbReference type="SUPFAM" id="SSF47240">
    <property type="entry name" value="Ferritin-like"/>
    <property type="match status" value="1"/>
</dbReference>
<protein>
    <recommendedName>
        <fullName evidence="1">3-demethoxyubiquinol 3-hydroxylase</fullName>
        <shortName evidence="1">DMQ hydroxylase</shortName>
        <ecNumber evidence="1">1.14.99.60</ecNumber>
    </recommendedName>
    <alternativeName>
        <fullName evidence="1">2-nonaprenyl-3-methyl-6-methoxy-1,4-benzoquinol hydroxylase</fullName>
    </alternativeName>
</protein>
<accession>B0KK40</accession>
<proteinExistence type="inferred from homology"/>
<feature type="chain" id="PRO_0000338715" description="3-demethoxyubiquinol 3-hydroxylase">
    <location>
        <begin position="1"/>
        <end position="215"/>
    </location>
</feature>
<feature type="binding site" evidence="1">
    <location>
        <position position="64"/>
    </location>
    <ligand>
        <name>Fe cation</name>
        <dbReference type="ChEBI" id="CHEBI:24875"/>
        <label>1</label>
    </ligand>
</feature>
<feature type="binding site" evidence="1">
    <location>
        <position position="94"/>
    </location>
    <ligand>
        <name>Fe cation</name>
        <dbReference type="ChEBI" id="CHEBI:24875"/>
        <label>1</label>
    </ligand>
</feature>
<feature type="binding site" evidence="1">
    <location>
        <position position="94"/>
    </location>
    <ligand>
        <name>Fe cation</name>
        <dbReference type="ChEBI" id="CHEBI:24875"/>
        <label>2</label>
    </ligand>
</feature>
<feature type="binding site" evidence="1">
    <location>
        <position position="97"/>
    </location>
    <ligand>
        <name>Fe cation</name>
        <dbReference type="ChEBI" id="CHEBI:24875"/>
        <label>1</label>
    </ligand>
</feature>
<feature type="binding site" evidence="1">
    <location>
        <position position="146"/>
    </location>
    <ligand>
        <name>Fe cation</name>
        <dbReference type="ChEBI" id="CHEBI:24875"/>
        <label>2</label>
    </ligand>
</feature>
<feature type="binding site" evidence="1">
    <location>
        <position position="178"/>
    </location>
    <ligand>
        <name>Fe cation</name>
        <dbReference type="ChEBI" id="CHEBI:24875"/>
        <label>1</label>
    </ligand>
</feature>
<feature type="binding site" evidence="1">
    <location>
        <position position="178"/>
    </location>
    <ligand>
        <name>Fe cation</name>
        <dbReference type="ChEBI" id="CHEBI:24875"/>
        <label>2</label>
    </ligand>
</feature>
<feature type="binding site" evidence="1">
    <location>
        <position position="181"/>
    </location>
    <ligand>
        <name>Fe cation</name>
        <dbReference type="ChEBI" id="CHEBI:24875"/>
        <label>2</label>
    </ligand>
</feature>
<organism>
    <name type="scientific">Pseudomonas putida (strain GB-1)</name>
    <dbReference type="NCBI Taxonomy" id="76869"/>
    <lineage>
        <taxon>Bacteria</taxon>
        <taxon>Pseudomonadati</taxon>
        <taxon>Pseudomonadota</taxon>
        <taxon>Gammaproteobacteria</taxon>
        <taxon>Pseudomonadales</taxon>
        <taxon>Pseudomonadaceae</taxon>
        <taxon>Pseudomonas</taxon>
    </lineage>
</organism>
<gene>
    <name evidence="1" type="primary">coq7</name>
    <name type="ordered locus">PputGB1_0457</name>
</gene>
<comment type="function">
    <text evidence="1">Catalyzes the hydroxylation of 2-nonaprenyl-3-methyl-6-methoxy-1,4-benzoquinol during ubiquinone biosynthesis.</text>
</comment>
<comment type="catalytic activity">
    <reaction evidence="1">
        <text>a 5-methoxy-2-methyl-3-(all-trans-polyprenyl)benzene-1,4-diol + AH2 + O2 = a 3-demethylubiquinol + A + H2O</text>
        <dbReference type="Rhea" id="RHEA:50908"/>
        <dbReference type="Rhea" id="RHEA-COMP:10859"/>
        <dbReference type="Rhea" id="RHEA-COMP:10914"/>
        <dbReference type="ChEBI" id="CHEBI:13193"/>
        <dbReference type="ChEBI" id="CHEBI:15377"/>
        <dbReference type="ChEBI" id="CHEBI:15379"/>
        <dbReference type="ChEBI" id="CHEBI:17499"/>
        <dbReference type="ChEBI" id="CHEBI:84167"/>
        <dbReference type="ChEBI" id="CHEBI:84422"/>
        <dbReference type="EC" id="1.14.99.60"/>
    </reaction>
</comment>
<comment type="cofactor">
    <cofactor evidence="1">
        <name>Fe cation</name>
        <dbReference type="ChEBI" id="CHEBI:24875"/>
    </cofactor>
    <text evidence="1">Binds 2 iron ions per subunit.</text>
</comment>
<comment type="pathway">
    <text evidence="1">Cofactor biosynthesis; ubiquinone biosynthesis.</text>
</comment>
<comment type="subcellular location">
    <subcellularLocation>
        <location evidence="1">Cell membrane</location>
        <topology evidence="1">Peripheral membrane protein</topology>
    </subcellularLocation>
</comment>
<comment type="similarity">
    <text evidence="1">Belongs to the COQ7 family.</text>
</comment>
<sequence>MATERHYSPLDRLLLQADTAMRTLLPFSGQPARPSPAIIQPDADLDEQQSRHIAGLMRINHTGEVCAQALYQGQALTAKLPEVRKAMEHAAEEEIDHLAWCEQRIRQLNSHPSVLNPLFYGMSFGIGALAGLVSDKVSLGFVAATEHQVCKHLDEHLEQIPHEDEKSRAILEQMRIDEEQHAESALEAGGYRFPAPVRFGMSLLAKVMTKSTYRI</sequence>
<name>COQ7_PSEPG</name>
<reference key="1">
    <citation type="submission" date="2008-01" db="EMBL/GenBank/DDBJ databases">
        <title>Complete sequence of Pseudomonas putida GB-1.</title>
        <authorList>
            <consortium name="US DOE Joint Genome Institute"/>
            <person name="Copeland A."/>
            <person name="Lucas S."/>
            <person name="Lapidus A."/>
            <person name="Barry K."/>
            <person name="Glavina del Rio T."/>
            <person name="Dalin E."/>
            <person name="Tice H."/>
            <person name="Pitluck S."/>
            <person name="Bruce D."/>
            <person name="Goodwin L."/>
            <person name="Chertkov O."/>
            <person name="Brettin T."/>
            <person name="Detter J.C."/>
            <person name="Han C."/>
            <person name="Kuske C.R."/>
            <person name="Schmutz J."/>
            <person name="Larimer F."/>
            <person name="Land M."/>
            <person name="Hauser L."/>
            <person name="Kyrpides N."/>
            <person name="Kim E."/>
            <person name="McCarthy J.K."/>
            <person name="Richardson P."/>
        </authorList>
    </citation>
    <scope>NUCLEOTIDE SEQUENCE [LARGE SCALE GENOMIC DNA]</scope>
    <source>
        <strain>GB-1</strain>
    </source>
</reference>
<evidence type="ECO:0000255" key="1">
    <source>
        <dbReference type="HAMAP-Rule" id="MF_01658"/>
    </source>
</evidence>
<keyword id="KW-1003">Cell membrane</keyword>
<keyword id="KW-0408">Iron</keyword>
<keyword id="KW-0472">Membrane</keyword>
<keyword id="KW-0479">Metal-binding</keyword>
<keyword id="KW-0503">Monooxygenase</keyword>
<keyword id="KW-0560">Oxidoreductase</keyword>
<keyword id="KW-0831">Ubiquinone biosynthesis</keyword>